<reference key="1">
    <citation type="submission" date="2006-10" db="EMBL/GenBank/DDBJ databases">
        <title>Complete sequence of Methanosaeta thermophila PT.</title>
        <authorList>
            <consortium name="US DOE Joint Genome Institute"/>
            <person name="Copeland A."/>
            <person name="Lucas S."/>
            <person name="Lapidus A."/>
            <person name="Barry K."/>
            <person name="Detter J.C."/>
            <person name="Glavina del Rio T."/>
            <person name="Hammon N."/>
            <person name="Israni S."/>
            <person name="Pitluck S."/>
            <person name="Chain P."/>
            <person name="Malfatti S."/>
            <person name="Shin M."/>
            <person name="Vergez L."/>
            <person name="Schmutz J."/>
            <person name="Larimer F."/>
            <person name="Land M."/>
            <person name="Hauser L."/>
            <person name="Kyrpides N."/>
            <person name="Kim E."/>
            <person name="Smith K.S."/>
            <person name="Ingram-Smith C."/>
            <person name="Richardson P."/>
        </authorList>
    </citation>
    <scope>NUCLEOTIDE SEQUENCE [LARGE SCALE GENOMIC DNA]</scope>
    <source>
        <strain>DSM 6194 / JCM 14653 / NBRC 101360 / PT</strain>
    </source>
</reference>
<feature type="chain" id="PRO_0000350684" description="Geranylgeranylglyceryl phosphate synthase">
    <location>
        <begin position="1"/>
        <end position="255"/>
    </location>
</feature>
<feature type="binding site" evidence="1">
    <location>
        <position position="31"/>
    </location>
    <ligand>
        <name>Mg(2+)</name>
        <dbReference type="ChEBI" id="CHEBI:18420"/>
    </ligand>
</feature>
<feature type="binding site" evidence="1">
    <location>
        <position position="60"/>
    </location>
    <ligand>
        <name>Mg(2+)</name>
        <dbReference type="ChEBI" id="CHEBI:18420"/>
    </ligand>
</feature>
<feature type="binding site" evidence="1">
    <location>
        <begin position="179"/>
        <end position="185"/>
    </location>
    <ligand>
        <name>sn-glycerol 1-phosphate</name>
        <dbReference type="ChEBI" id="CHEBI:57685"/>
    </ligand>
</feature>
<feature type="binding site" evidence="1">
    <location>
        <begin position="211"/>
        <end position="212"/>
    </location>
    <ligand>
        <name>sn-glycerol 1-phosphate</name>
        <dbReference type="ChEBI" id="CHEBI:57685"/>
    </ligand>
</feature>
<feature type="binding site" evidence="1">
    <location>
        <begin position="233"/>
        <end position="234"/>
    </location>
    <ligand>
        <name>sn-glycerol 1-phosphate</name>
        <dbReference type="ChEBI" id="CHEBI:57685"/>
    </ligand>
</feature>
<proteinExistence type="inferred from homology"/>
<name>GGGPS_METTP</name>
<accession>A0B8J3</accession>
<comment type="function">
    <text evidence="1">Prenyltransferase that catalyzes the transfer of the geranylgeranyl moiety of geranylgeranyl diphosphate (GGPP) to the C3 hydroxyl of sn-glycerol-1-phosphate (G1P). This reaction is the first ether-bond-formation step in the biosynthesis of archaeal membrane lipids.</text>
</comment>
<comment type="catalytic activity">
    <reaction evidence="1">
        <text>sn-glycerol 1-phosphate + (2E,6E,10E)-geranylgeranyl diphosphate = sn-3-O-(geranylgeranyl)glycerol 1-phosphate + diphosphate</text>
        <dbReference type="Rhea" id="RHEA:23404"/>
        <dbReference type="ChEBI" id="CHEBI:33019"/>
        <dbReference type="ChEBI" id="CHEBI:57677"/>
        <dbReference type="ChEBI" id="CHEBI:57685"/>
        <dbReference type="ChEBI" id="CHEBI:58756"/>
        <dbReference type="EC" id="2.5.1.41"/>
    </reaction>
</comment>
<comment type="cofactor">
    <cofactor evidence="1">
        <name>Mg(2+)</name>
        <dbReference type="ChEBI" id="CHEBI:18420"/>
    </cofactor>
</comment>
<comment type="pathway">
    <text evidence="1">Membrane lipid metabolism; glycerophospholipid metabolism.</text>
</comment>
<comment type="subcellular location">
    <subcellularLocation>
        <location evidence="1">Cytoplasm</location>
    </subcellularLocation>
</comment>
<comment type="similarity">
    <text evidence="1">Belongs to the GGGP/HepGP synthase family. Group II subfamily.</text>
</comment>
<keyword id="KW-0963">Cytoplasm</keyword>
<keyword id="KW-0444">Lipid biosynthesis</keyword>
<keyword id="KW-0443">Lipid metabolism</keyword>
<keyword id="KW-0460">Magnesium</keyword>
<keyword id="KW-0479">Metal-binding</keyword>
<keyword id="KW-0594">Phospholipid biosynthesis</keyword>
<keyword id="KW-1208">Phospholipid metabolism</keyword>
<keyword id="KW-1185">Reference proteome</keyword>
<keyword id="KW-0808">Transferase</keyword>
<gene>
    <name type="ordered locus">Mthe_1238</name>
</gene>
<evidence type="ECO:0000255" key="1">
    <source>
        <dbReference type="HAMAP-Rule" id="MF_00112"/>
    </source>
</evidence>
<organism>
    <name type="scientific">Methanothrix thermoacetophila (strain DSM 6194 / JCM 14653 / NBRC 101360 / PT)</name>
    <name type="common">Methanosaeta thermophila</name>
    <dbReference type="NCBI Taxonomy" id="349307"/>
    <lineage>
        <taxon>Archaea</taxon>
        <taxon>Methanobacteriati</taxon>
        <taxon>Methanobacteriota</taxon>
        <taxon>Stenosarchaea group</taxon>
        <taxon>Methanomicrobia</taxon>
        <taxon>Methanotrichales</taxon>
        <taxon>Methanotrichaceae</taxon>
        <taxon>Methanothrix</taxon>
    </lineage>
</organism>
<sequence>MLRKRVEIGPVESGLWNAVETDGAAHLTLIDPASQDPERAVQMARSAADAGTTALMVGGSVGATGSALDRTVRAIKDSVDLPVILFPSSAAGLCDNADAVFFMSLLNSRSTSYLIENQALGAPIVSRYGIEAIPMGYIVVEPGGTVGWVGDAKLVPRRKPDIAAAYALAGRYLGMRLIYLEAGSGAESPVPTSMVSAVRDAIGDTLLVVGGGIRDAEAARKLVSAGADLIVTGTGVEESGDVFRFVKDIVTAIHV</sequence>
<protein>
    <recommendedName>
        <fullName evidence="1">Geranylgeranylglyceryl phosphate synthase</fullName>
        <shortName evidence="1">GGGP synthase</shortName>
        <shortName evidence="1">GGGPS</shortName>
        <ecNumber evidence="1">2.5.1.41</ecNumber>
    </recommendedName>
    <alternativeName>
        <fullName evidence="1">(S)-3-O-geranylgeranylglyceryl phosphate synthase</fullName>
    </alternativeName>
    <alternativeName>
        <fullName evidence="1">Phosphoglycerol geranylgeranyltransferase</fullName>
    </alternativeName>
</protein>
<dbReference type="EC" id="2.5.1.41" evidence="1"/>
<dbReference type="EMBL" id="CP000477">
    <property type="protein sequence ID" value="ABK15017.1"/>
    <property type="molecule type" value="Genomic_DNA"/>
</dbReference>
<dbReference type="RefSeq" id="WP_011696409.1">
    <property type="nucleotide sequence ID" value="NC_008553.1"/>
</dbReference>
<dbReference type="SMR" id="A0B8J3"/>
<dbReference type="STRING" id="349307.Mthe_1238"/>
<dbReference type="GeneID" id="4463169"/>
<dbReference type="KEGG" id="mtp:Mthe_1238"/>
<dbReference type="HOGENOM" id="CLU_068610_0_0_2"/>
<dbReference type="OrthoDB" id="7409at2157"/>
<dbReference type="UniPathway" id="UPA00940"/>
<dbReference type="Proteomes" id="UP000000674">
    <property type="component" value="Chromosome"/>
</dbReference>
<dbReference type="GO" id="GO:0005737">
    <property type="term" value="C:cytoplasm"/>
    <property type="evidence" value="ECO:0007669"/>
    <property type="project" value="UniProtKB-SubCell"/>
</dbReference>
<dbReference type="GO" id="GO:0000287">
    <property type="term" value="F:magnesium ion binding"/>
    <property type="evidence" value="ECO:0007669"/>
    <property type="project" value="UniProtKB-UniRule"/>
</dbReference>
<dbReference type="GO" id="GO:0047294">
    <property type="term" value="F:phosphoglycerol geranylgeranyltransferase activity"/>
    <property type="evidence" value="ECO:0007669"/>
    <property type="project" value="UniProtKB-UniRule"/>
</dbReference>
<dbReference type="GO" id="GO:0046474">
    <property type="term" value="P:glycerophospholipid biosynthetic process"/>
    <property type="evidence" value="ECO:0007669"/>
    <property type="project" value="UniProtKB-UniRule"/>
</dbReference>
<dbReference type="CDD" id="cd02812">
    <property type="entry name" value="PcrB_like"/>
    <property type="match status" value="1"/>
</dbReference>
<dbReference type="FunFam" id="3.20.20.390:FF:000001">
    <property type="entry name" value="Heptaprenylglyceryl phosphate synthase"/>
    <property type="match status" value="1"/>
</dbReference>
<dbReference type="Gene3D" id="3.20.20.390">
    <property type="entry name" value="FMN-linked oxidoreductases"/>
    <property type="match status" value="1"/>
</dbReference>
<dbReference type="HAMAP" id="MF_00112">
    <property type="entry name" value="GGGP_HepGP_synthase"/>
    <property type="match status" value="1"/>
</dbReference>
<dbReference type="InterPro" id="IPR039074">
    <property type="entry name" value="GGGP/HepGP_synthase_I"/>
</dbReference>
<dbReference type="InterPro" id="IPR038597">
    <property type="entry name" value="GGGP/HepGP_synthase_sf"/>
</dbReference>
<dbReference type="InterPro" id="IPR008205">
    <property type="entry name" value="GGGP_HepGP_synthase"/>
</dbReference>
<dbReference type="InterPro" id="IPR010946">
    <property type="entry name" value="GGGP_synth"/>
</dbReference>
<dbReference type="NCBIfam" id="TIGR01769">
    <property type="entry name" value="GGGP"/>
    <property type="match status" value="1"/>
</dbReference>
<dbReference type="NCBIfam" id="TIGR01768">
    <property type="entry name" value="GGGP-family"/>
    <property type="match status" value="1"/>
</dbReference>
<dbReference type="NCBIfam" id="NF003198">
    <property type="entry name" value="PRK04169.1-2"/>
    <property type="match status" value="1"/>
</dbReference>
<dbReference type="PANTHER" id="PTHR40029">
    <property type="match status" value="1"/>
</dbReference>
<dbReference type="PANTHER" id="PTHR40029:SF2">
    <property type="entry name" value="HEPTAPRENYLGLYCERYL PHOSPHATE SYNTHASE"/>
    <property type="match status" value="1"/>
</dbReference>
<dbReference type="Pfam" id="PF01884">
    <property type="entry name" value="PcrB"/>
    <property type="match status" value="1"/>
</dbReference>
<dbReference type="SUPFAM" id="SSF51395">
    <property type="entry name" value="FMN-linked oxidoreductases"/>
    <property type="match status" value="1"/>
</dbReference>